<comment type="function">
    <text evidence="1">Catalyzes the conversion of dethiobiotin (DTB) to biotin by the insertion of a sulfur atom into dethiobiotin via a radical-based mechanism.</text>
</comment>
<comment type="catalytic activity">
    <reaction evidence="1">
        <text>(4R,5S)-dethiobiotin + (sulfur carrier)-SH + 2 reduced [2Fe-2S]-[ferredoxin] + 2 S-adenosyl-L-methionine = (sulfur carrier)-H + biotin + 2 5'-deoxyadenosine + 2 L-methionine + 2 oxidized [2Fe-2S]-[ferredoxin]</text>
        <dbReference type="Rhea" id="RHEA:22060"/>
        <dbReference type="Rhea" id="RHEA-COMP:10000"/>
        <dbReference type="Rhea" id="RHEA-COMP:10001"/>
        <dbReference type="Rhea" id="RHEA-COMP:14737"/>
        <dbReference type="Rhea" id="RHEA-COMP:14739"/>
        <dbReference type="ChEBI" id="CHEBI:17319"/>
        <dbReference type="ChEBI" id="CHEBI:29917"/>
        <dbReference type="ChEBI" id="CHEBI:33737"/>
        <dbReference type="ChEBI" id="CHEBI:33738"/>
        <dbReference type="ChEBI" id="CHEBI:57586"/>
        <dbReference type="ChEBI" id="CHEBI:57844"/>
        <dbReference type="ChEBI" id="CHEBI:59789"/>
        <dbReference type="ChEBI" id="CHEBI:64428"/>
        <dbReference type="ChEBI" id="CHEBI:149473"/>
        <dbReference type="EC" id="2.8.1.6"/>
    </reaction>
</comment>
<comment type="cofactor">
    <cofactor evidence="1">
        <name>[4Fe-4S] cluster</name>
        <dbReference type="ChEBI" id="CHEBI:49883"/>
    </cofactor>
    <text evidence="1">Binds 1 [4Fe-4S] cluster. The cluster is coordinated with 3 cysteines and an exchangeable S-adenosyl-L-methionine.</text>
</comment>
<comment type="cofactor">
    <cofactor evidence="1">
        <name>[2Fe-2S] cluster</name>
        <dbReference type="ChEBI" id="CHEBI:190135"/>
    </cofactor>
    <text evidence="1">Binds 1 [2Fe-2S] cluster. The cluster is coordinated with 3 cysteines and 1 arginine.</text>
</comment>
<comment type="pathway">
    <text evidence="1">Cofactor biosynthesis; biotin biosynthesis; biotin from 7,8-diaminononanoate: step 2/2.</text>
</comment>
<comment type="subunit">
    <text evidence="1">Homodimer.</text>
</comment>
<comment type="similarity">
    <text evidence="1">Belongs to the radical SAM superfamily. Biotin synthase family.</text>
</comment>
<proteinExistence type="inferred from homology"/>
<accession>A1S5I9</accession>
<organism>
    <name type="scientific">Shewanella amazonensis (strain ATCC BAA-1098 / SB2B)</name>
    <dbReference type="NCBI Taxonomy" id="326297"/>
    <lineage>
        <taxon>Bacteria</taxon>
        <taxon>Pseudomonadati</taxon>
        <taxon>Pseudomonadota</taxon>
        <taxon>Gammaproteobacteria</taxon>
        <taxon>Alteromonadales</taxon>
        <taxon>Shewanellaceae</taxon>
        <taxon>Shewanella</taxon>
    </lineage>
</organism>
<feature type="chain" id="PRO_0000381612" description="Biotin synthase">
    <location>
        <begin position="1"/>
        <end position="354"/>
    </location>
</feature>
<feature type="domain" description="Radical SAM core" evidence="2">
    <location>
        <begin position="41"/>
        <end position="268"/>
    </location>
</feature>
<feature type="binding site" evidence="1">
    <location>
        <position position="56"/>
    </location>
    <ligand>
        <name>[4Fe-4S] cluster</name>
        <dbReference type="ChEBI" id="CHEBI:49883"/>
        <note>4Fe-4S-S-AdoMet</note>
    </ligand>
</feature>
<feature type="binding site" evidence="1">
    <location>
        <position position="60"/>
    </location>
    <ligand>
        <name>[4Fe-4S] cluster</name>
        <dbReference type="ChEBI" id="CHEBI:49883"/>
        <note>4Fe-4S-S-AdoMet</note>
    </ligand>
</feature>
<feature type="binding site" evidence="1">
    <location>
        <position position="63"/>
    </location>
    <ligand>
        <name>[4Fe-4S] cluster</name>
        <dbReference type="ChEBI" id="CHEBI:49883"/>
        <note>4Fe-4S-S-AdoMet</note>
    </ligand>
</feature>
<feature type="binding site" evidence="1">
    <location>
        <position position="100"/>
    </location>
    <ligand>
        <name>[2Fe-2S] cluster</name>
        <dbReference type="ChEBI" id="CHEBI:190135"/>
    </ligand>
</feature>
<feature type="binding site" evidence="1">
    <location>
        <position position="131"/>
    </location>
    <ligand>
        <name>[2Fe-2S] cluster</name>
        <dbReference type="ChEBI" id="CHEBI:190135"/>
    </ligand>
</feature>
<feature type="binding site" evidence="1">
    <location>
        <position position="191"/>
    </location>
    <ligand>
        <name>[2Fe-2S] cluster</name>
        <dbReference type="ChEBI" id="CHEBI:190135"/>
    </ligand>
</feature>
<feature type="binding site" evidence="1">
    <location>
        <position position="263"/>
    </location>
    <ligand>
        <name>[2Fe-2S] cluster</name>
        <dbReference type="ChEBI" id="CHEBI:190135"/>
    </ligand>
</feature>
<name>BIOB_SHEAM</name>
<keyword id="KW-0001">2Fe-2S</keyword>
<keyword id="KW-0004">4Fe-4S</keyword>
<keyword id="KW-0093">Biotin biosynthesis</keyword>
<keyword id="KW-0408">Iron</keyword>
<keyword id="KW-0411">Iron-sulfur</keyword>
<keyword id="KW-0479">Metal-binding</keyword>
<keyword id="KW-1185">Reference proteome</keyword>
<keyword id="KW-0949">S-adenosyl-L-methionine</keyword>
<keyword id="KW-0808">Transferase</keyword>
<gene>
    <name evidence="1" type="primary">bioB</name>
    <name type="ordered locus">Sama_1438</name>
</gene>
<evidence type="ECO:0000255" key="1">
    <source>
        <dbReference type="HAMAP-Rule" id="MF_01694"/>
    </source>
</evidence>
<evidence type="ECO:0000255" key="2">
    <source>
        <dbReference type="PROSITE-ProRule" id="PRU01266"/>
    </source>
</evidence>
<reference key="1">
    <citation type="submission" date="2006-12" db="EMBL/GenBank/DDBJ databases">
        <title>Complete sequence of Shewanella amazonensis SB2B.</title>
        <authorList>
            <consortium name="US DOE Joint Genome Institute"/>
            <person name="Copeland A."/>
            <person name="Lucas S."/>
            <person name="Lapidus A."/>
            <person name="Barry K."/>
            <person name="Detter J.C."/>
            <person name="Glavina del Rio T."/>
            <person name="Hammon N."/>
            <person name="Israni S."/>
            <person name="Dalin E."/>
            <person name="Tice H."/>
            <person name="Pitluck S."/>
            <person name="Munk A.C."/>
            <person name="Brettin T."/>
            <person name="Bruce D."/>
            <person name="Han C."/>
            <person name="Tapia R."/>
            <person name="Gilna P."/>
            <person name="Schmutz J."/>
            <person name="Larimer F."/>
            <person name="Land M."/>
            <person name="Hauser L."/>
            <person name="Kyrpides N."/>
            <person name="Mikhailova N."/>
            <person name="Fredrickson J."/>
            <person name="Richardson P."/>
        </authorList>
    </citation>
    <scope>NUCLEOTIDE SEQUENCE [LARGE SCALE GENOMIC DNA]</scope>
    <source>
        <strain>ATCC BAA-1098 / SB2B</strain>
    </source>
</reference>
<sequence>MSSFAVRHDWSRQEVEALFALPMNDLLFRAHSIHREVFDPNEVQISRLLSIKTGACPEDCKYCPQSARYDTGLEKERLLEIEKVLTEARAAKDAGATRFCMGAAWRNPHERDMPYLTDMVKEVKSMGLETCMTLGMLSAHQANQLAEAGLDYYNHNLDTSPEFYGDIITTRTYQDRLDTLSNVRAAGMKVCSGGIVGMGEQATDRAGLLQQLANLEQHPDSVPINMLVKVTGTPLDSVDDLDPLEFVRTIAVARILMPLSRVRLSAGRENMSDELQAMCFFAGANSIFYGCKLLTTPNPEENDDMSLFRRLGLKPEQGKAAIVEEDAAVVARAAREQQAEGEAKTKPLFYDAAN</sequence>
<protein>
    <recommendedName>
        <fullName evidence="1">Biotin synthase</fullName>
        <ecNumber evidence="1">2.8.1.6</ecNumber>
    </recommendedName>
</protein>
<dbReference type="EC" id="2.8.1.6" evidence="1"/>
<dbReference type="EMBL" id="CP000507">
    <property type="protein sequence ID" value="ABL99645.1"/>
    <property type="molecule type" value="Genomic_DNA"/>
</dbReference>
<dbReference type="RefSeq" id="WP_011759553.1">
    <property type="nucleotide sequence ID" value="NC_008700.1"/>
</dbReference>
<dbReference type="SMR" id="A1S5I9"/>
<dbReference type="STRING" id="326297.Sama_1438"/>
<dbReference type="KEGG" id="saz:Sama_1438"/>
<dbReference type="eggNOG" id="COG0502">
    <property type="taxonomic scope" value="Bacteria"/>
</dbReference>
<dbReference type="HOGENOM" id="CLU_033172_1_2_6"/>
<dbReference type="OrthoDB" id="9786826at2"/>
<dbReference type="UniPathway" id="UPA00078">
    <property type="reaction ID" value="UER00162"/>
</dbReference>
<dbReference type="Proteomes" id="UP000009175">
    <property type="component" value="Chromosome"/>
</dbReference>
<dbReference type="GO" id="GO:0051537">
    <property type="term" value="F:2 iron, 2 sulfur cluster binding"/>
    <property type="evidence" value="ECO:0007669"/>
    <property type="project" value="UniProtKB-KW"/>
</dbReference>
<dbReference type="GO" id="GO:0051539">
    <property type="term" value="F:4 iron, 4 sulfur cluster binding"/>
    <property type="evidence" value="ECO:0007669"/>
    <property type="project" value="UniProtKB-KW"/>
</dbReference>
<dbReference type="GO" id="GO:0004076">
    <property type="term" value="F:biotin synthase activity"/>
    <property type="evidence" value="ECO:0007669"/>
    <property type="project" value="UniProtKB-UniRule"/>
</dbReference>
<dbReference type="GO" id="GO:0005506">
    <property type="term" value="F:iron ion binding"/>
    <property type="evidence" value="ECO:0007669"/>
    <property type="project" value="UniProtKB-UniRule"/>
</dbReference>
<dbReference type="GO" id="GO:0009102">
    <property type="term" value="P:biotin biosynthetic process"/>
    <property type="evidence" value="ECO:0007669"/>
    <property type="project" value="UniProtKB-UniRule"/>
</dbReference>
<dbReference type="CDD" id="cd01335">
    <property type="entry name" value="Radical_SAM"/>
    <property type="match status" value="1"/>
</dbReference>
<dbReference type="FunFam" id="3.20.20.70:FF:000011">
    <property type="entry name" value="Biotin synthase"/>
    <property type="match status" value="1"/>
</dbReference>
<dbReference type="Gene3D" id="3.20.20.70">
    <property type="entry name" value="Aldolase class I"/>
    <property type="match status" value="1"/>
</dbReference>
<dbReference type="HAMAP" id="MF_01694">
    <property type="entry name" value="BioB"/>
    <property type="match status" value="1"/>
</dbReference>
<dbReference type="InterPro" id="IPR013785">
    <property type="entry name" value="Aldolase_TIM"/>
</dbReference>
<dbReference type="InterPro" id="IPR010722">
    <property type="entry name" value="BATS_dom"/>
</dbReference>
<dbReference type="InterPro" id="IPR002684">
    <property type="entry name" value="Biotin_synth/BioAB"/>
</dbReference>
<dbReference type="InterPro" id="IPR024177">
    <property type="entry name" value="Biotin_synthase"/>
</dbReference>
<dbReference type="InterPro" id="IPR006638">
    <property type="entry name" value="Elp3/MiaA/NifB-like_rSAM"/>
</dbReference>
<dbReference type="InterPro" id="IPR007197">
    <property type="entry name" value="rSAM"/>
</dbReference>
<dbReference type="NCBIfam" id="TIGR00433">
    <property type="entry name" value="bioB"/>
    <property type="match status" value="1"/>
</dbReference>
<dbReference type="PANTHER" id="PTHR22976">
    <property type="entry name" value="BIOTIN SYNTHASE"/>
    <property type="match status" value="1"/>
</dbReference>
<dbReference type="PANTHER" id="PTHR22976:SF2">
    <property type="entry name" value="BIOTIN SYNTHASE, MITOCHONDRIAL"/>
    <property type="match status" value="1"/>
</dbReference>
<dbReference type="Pfam" id="PF06968">
    <property type="entry name" value="BATS"/>
    <property type="match status" value="1"/>
</dbReference>
<dbReference type="Pfam" id="PF04055">
    <property type="entry name" value="Radical_SAM"/>
    <property type="match status" value="1"/>
</dbReference>
<dbReference type="PIRSF" id="PIRSF001619">
    <property type="entry name" value="Biotin_synth"/>
    <property type="match status" value="1"/>
</dbReference>
<dbReference type="SFLD" id="SFLDF00272">
    <property type="entry name" value="biotin_synthase"/>
    <property type="match status" value="1"/>
</dbReference>
<dbReference type="SFLD" id="SFLDG01278">
    <property type="entry name" value="biotin_synthase_like"/>
    <property type="match status" value="1"/>
</dbReference>
<dbReference type="SMART" id="SM00876">
    <property type="entry name" value="BATS"/>
    <property type="match status" value="1"/>
</dbReference>
<dbReference type="SMART" id="SM00729">
    <property type="entry name" value="Elp3"/>
    <property type="match status" value="1"/>
</dbReference>
<dbReference type="SUPFAM" id="SSF102114">
    <property type="entry name" value="Radical SAM enzymes"/>
    <property type="match status" value="1"/>
</dbReference>
<dbReference type="PROSITE" id="PS51918">
    <property type="entry name" value="RADICAL_SAM"/>
    <property type="match status" value="1"/>
</dbReference>